<feature type="signal peptide" evidence="1">
    <location>
        <begin position="1"/>
        <end position="15"/>
    </location>
</feature>
<feature type="chain" id="PRO_0000312916" description="Endo-type membrane-bound lytic murein transglycosylase A">
    <location>
        <begin position="16"/>
        <end position="203"/>
    </location>
</feature>
<feature type="lipid moiety-binding region" description="N-palmitoyl cysteine" evidence="1">
    <location>
        <position position="16"/>
    </location>
</feature>
<feature type="lipid moiety-binding region" description="S-diacylglycerol cysteine" evidence="1">
    <location>
        <position position="16"/>
    </location>
</feature>
<name>EMTA_SHIFL</name>
<organism>
    <name type="scientific">Shigella flexneri</name>
    <dbReference type="NCBI Taxonomy" id="623"/>
    <lineage>
        <taxon>Bacteria</taxon>
        <taxon>Pseudomonadati</taxon>
        <taxon>Pseudomonadota</taxon>
        <taxon>Gammaproteobacteria</taxon>
        <taxon>Enterobacterales</taxon>
        <taxon>Enterobacteriaceae</taxon>
        <taxon>Shigella</taxon>
    </lineage>
</organism>
<keyword id="KW-0998">Cell outer membrane</keyword>
<keyword id="KW-0961">Cell wall biogenesis/degradation</keyword>
<keyword id="KW-0449">Lipoprotein</keyword>
<keyword id="KW-0456">Lyase</keyword>
<keyword id="KW-0472">Membrane</keyword>
<keyword id="KW-0564">Palmitate</keyword>
<keyword id="KW-1185">Reference proteome</keyword>
<keyword id="KW-0732">Signal</keyword>
<protein>
    <recommendedName>
        <fullName evidence="1">Endo-type membrane-bound lytic murein transglycosylase A</fullName>
        <ecNumber evidence="1">4.2.2.n2</ecNumber>
    </recommendedName>
    <alternativeName>
        <fullName evidence="1">Peptidoglycan lytic endotransglycosylase</fullName>
    </alternativeName>
</protein>
<gene>
    <name evidence="1" type="primary">emtA</name>
    <name type="synonym">mltE</name>
    <name type="ordered locus">SF1186</name>
    <name type="ordered locus">S1270</name>
</gene>
<sequence>MKLRWFAFLIVLLAGCSSKHDYTNPPWNAKVPVQRAMQWMPISQKAGAAWGVDPQLITAIIAIESGGNPNAVSKSNAIGLMQLKASTSGRDVYRRMGWSGEPTTSELKNPERNISMGAAYLNILETGPLAGIEDPKVLQYALVVSYANGAGALLRTFSSDRKKAISKINDLDADEFLDHVARNHPAPQAPRYIYKLEQALDAM</sequence>
<proteinExistence type="inferred from homology"/>
<evidence type="ECO:0000255" key="1">
    <source>
        <dbReference type="HAMAP-Rule" id="MF_01381"/>
    </source>
</evidence>
<evidence type="ECO:0000305" key="2"/>
<reference key="1">
    <citation type="journal article" date="2002" name="Nucleic Acids Res.">
        <title>Genome sequence of Shigella flexneri 2a: insights into pathogenicity through comparison with genomes of Escherichia coli K12 and O157.</title>
        <authorList>
            <person name="Jin Q."/>
            <person name="Yuan Z."/>
            <person name="Xu J."/>
            <person name="Wang Y."/>
            <person name="Shen Y."/>
            <person name="Lu W."/>
            <person name="Wang J."/>
            <person name="Liu H."/>
            <person name="Yang J."/>
            <person name="Yang F."/>
            <person name="Zhang X."/>
            <person name="Zhang J."/>
            <person name="Yang G."/>
            <person name="Wu H."/>
            <person name="Qu D."/>
            <person name="Dong J."/>
            <person name="Sun L."/>
            <person name="Xue Y."/>
            <person name="Zhao A."/>
            <person name="Gao Y."/>
            <person name="Zhu J."/>
            <person name="Kan B."/>
            <person name="Ding K."/>
            <person name="Chen S."/>
            <person name="Cheng H."/>
            <person name="Yao Z."/>
            <person name="He B."/>
            <person name="Chen R."/>
            <person name="Ma D."/>
            <person name="Qiang B."/>
            <person name="Wen Y."/>
            <person name="Hou Y."/>
            <person name="Yu J."/>
        </authorList>
    </citation>
    <scope>NUCLEOTIDE SEQUENCE [LARGE SCALE GENOMIC DNA]</scope>
    <source>
        <strain>301 / Serotype 2a</strain>
    </source>
</reference>
<reference key="2">
    <citation type="journal article" date="2003" name="Infect. Immun.">
        <title>Complete genome sequence and comparative genomics of Shigella flexneri serotype 2a strain 2457T.</title>
        <authorList>
            <person name="Wei J."/>
            <person name="Goldberg M.B."/>
            <person name="Burland V."/>
            <person name="Venkatesan M.M."/>
            <person name="Deng W."/>
            <person name="Fournier G."/>
            <person name="Mayhew G.F."/>
            <person name="Plunkett G. III"/>
            <person name="Rose D.J."/>
            <person name="Darling A."/>
            <person name="Mau B."/>
            <person name="Perna N.T."/>
            <person name="Payne S.M."/>
            <person name="Runyen-Janecky L.J."/>
            <person name="Zhou S."/>
            <person name="Schwartz D.C."/>
            <person name="Blattner F.R."/>
        </authorList>
    </citation>
    <scope>NUCLEOTIDE SEQUENCE [LARGE SCALE GENOMIC DNA]</scope>
    <source>
        <strain>ATCC 700930 / 2457T / Serotype 2a</strain>
    </source>
</reference>
<comment type="function">
    <text evidence="1">Murein-degrading enzyme. May play a role in recycling of muropeptides during cell elongation and/or cell division. Preferentially cleaves at a distance of more than two disaccharide units from the ends of the glycan chain.</text>
</comment>
<comment type="catalytic activity">
    <reaction evidence="1">
        <text>Endolytic cleavage of the (1-&gt;4)-beta-glycosidic linkage between N-acetylmuramic acid (MurNAc) and N-acetylglucosamine (GlcNAc) residues in peptidoglycan with concomitant formation of a 1,6-anhydrobond in the MurNAc residue.</text>
        <dbReference type="EC" id="4.2.2.n2"/>
    </reaction>
</comment>
<comment type="subcellular location">
    <subcellularLocation>
        <location evidence="1">Cell outer membrane</location>
        <topology evidence="1">Lipid-anchor</topology>
    </subcellularLocation>
</comment>
<comment type="similarity">
    <text evidence="1">Belongs to the transglycosylase Slt family.</text>
</comment>
<comment type="sequence caution" evidence="2">
    <conflict type="erroneous initiation">
        <sequence resource="EMBL-CDS" id="AAN42801"/>
    </conflict>
</comment>
<comment type="sequence caution" evidence="2">
    <conflict type="erroneous initiation">
        <sequence resource="EMBL-CDS" id="AAP16689"/>
    </conflict>
</comment>
<dbReference type="EC" id="4.2.2.n2" evidence="1"/>
<dbReference type="EMBL" id="AE005674">
    <property type="protein sequence ID" value="AAN42801.1"/>
    <property type="status" value="ALT_INIT"/>
    <property type="molecule type" value="Genomic_DNA"/>
</dbReference>
<dbReference type="EMBL" id="AE014073">
    <property type="protein sequence ID" value="AAP16689.1"/>
    <property type="status" value="ALT_INIT"/>
    <property type="molecule type" value="Genomic_DNA"/>
</dbReference>
<dbReference type="RefSeq" id="NP_707094.1">
    <property type="nucleotide sequence ID" value="NC_004337.2"/>
</dbReference>
<dbReference type="RefSeq" id="WP_001295616.1">
    <property type="nucleotide sequence ID" value="NZ_WPGW01000047.1"/>
</dbReference>
<dbReference type="SMR" id="Q83RP9"/>
<dbReference type="GeneID" id="1024150"/>
<dbReference type="GeneID" id="75171299"/>
<dbReference type="KEGG" id="sfl:SF1186"/>
<dbReference type="KEGG" id="sfx:S1270"/>
<dbReference type="PATRIC" id="fig|198214.7.peg.1401"/>
<dbReference type="HOGENOM" id="CLU_103257_0_0_6"/>
<dbReference type="Proteomes" id="UP000001006">
    <property type="component" value="Chromosome"/>
</dbReference>
<dbReference type="Proteomes" id="UP000002673">
    <property type="component" value="Chromosome"/>
</dbReference>
<dbReference type="GO" id="GO:0009279">
    <property type="term" value="C:cell outer membrane"/>
    <property type="evidence" value="ECO:0007669"/>
    <property type="project" value="UniProtKB-SubCell"/>
</dbReference>
<dbReference type="GO" id="GO:0008932">
    <property type="term" value="F:lytic endotransglycosylase activity"/>
    <property type="evidence" value="ECO:0007669"/>
    <property type="project" value="InterPro"/>
</dbReference>
<dbReference type="GO" id="GO:0016998">
    <property type="term" value="P:cell wall macromolecule catabolic process"/>
    <property type="evidence" value="ECO:0007669"/>
    <property type="project" value="UniProtKB-UniRule"/>
</dbReference>
<dbReference type="GO" id="GO:0071555">
    <property type="term" value="P:cell wall organization"/>
    <property type="evidence" value="ECO:0007669"/>
    <property type="project" value="UniProtKB-KW"/>
</dbReference>
<dbReference type="GO" id="GO:0000270">
    <property type="term" value="P:peptidoglycan metabolic process"/>
    <property type="evidence" value="ECO:0007669"/>
    <property type="project" value="InterPro"/>
</dbReference>
<dbReference type="CDD" id="cd16893">
    <property type="entry name" value="LT_MltC_MltE"/>
    <property type="match status" value="1"/>
</dbReference>
<dbReference type="FunFam" id="1.10.530.10:FF:000007">
    <property type="entry name" value="Endo-type membrane-bound lytic murein transglycosylase A"/>
    <property type="match status" value="1"/>
</dbReference>
<dbReference type="Gene3D" id="1.10.530.10">
    <property type="match status" value="1"/>
</dbReference>
<dbReference type="HAMAP" id="MF_01381">
    <property type="entry name" value="EmtA"/>
    <property type="match status" value="1"/>
</dbReference>
<dbReference type="InterPro" id="IPR023946">
    <property type="entry name" value="EmtA"/>
</dbReference>
<dbReference type="InterPro" id="IPR023346">
    <property type="entry name" value="Lysozyme-like_dom_sf"/>
</dbReference>
<dbReference type="InterPro" id="IPR000189">
    <property type="entry name" value="Transglyc_AS"/>
</dbReference>
<dbReference type="InterPro" id="IPR008258">
    <property type="entry name" value="Transglycosylase_SLT_dom_1"/>
</dbReference>
<dbReference type="NCBIfam" id="NF012014">
    <property type="entry name" value="PRK15470.1"/>
    <property type="match status" value="1"/>
</dbReference>
<dbReference type="PANTHER" id="PTHR37423:SF4">
    <property type="entry name" value="ENDO-TYPE MEMBRANE-BOUND LYTIC MUREIN TRANSGLYCOSYLASE A"/>
    <property type="match status" value="1"/>
</dbReference>
<dbReference type="PANTHER" id="PTHR37423">
    <property type="entry name" value="SOLUBLE LYTIC MUREIN TRANSGLYCOSYLASE-RELATED"/>
    <property type="match status" value="1"/>
</dbReference>
<dbReference type="Pfam" id="PF01464">
    <property type="entry name" value="SLT"/>
    <property type="match status" value="1"/>
</dbReference>
<dbReference type="SUPFAM" id="SSF53955">
    <property type="entry name" value="Lysozyme-like"/>
    <property type="match status" value="1"/>
</dbReference>
<dbReference type="PROSITE" id="PS51257">
    <property type="entry name" value="PROKAR_LIPOPROTEIN"/>
    <property type="match status" value="1"/>
</dbReference>
<dbReference type="PROSITE" id="PS00922">
    <property type="entry name" value="TRANSGLYCOSYLASE"/>
    <property type="match status" value="1"/>
</dbReference>
<accession>Q83RP9</accession>
<accession>Q7UCT3</accession>